<keyword id="KW-0963">Cytoplasm</keyword>
<keyword id="KW-0275">Fatty acid biosynthesis</keyword>
<keyword id="KW-0276">Fatty acid metabolism</keyword>
<keyword id="KW-0413">Isomerase</keyword>
<keyword id="KW-0444">Lipid biosynthesis</keyword>
<keyword id="KW-0443">Lipid metabolism</keyword>
<keyword id="KW-0456">Lyase</keyword>
<keyword id="KW-1185">Reference proteome</keyword>
<dbReference type="EC" id="4.2.1.59" evidence="1"/>
<dbReference type="EC" id="5.3.3.14" evidence="1"/>
<dbReference type="EMBL" id="AM743169">
    <property type="protein sequence ID" value="CAQ44165.1"/>
    <property type="molecule type" value="Genomic_DNA"/>
</dbReference>
<dbReference type="RefSeq" id="WP_005407930.1">
    <property type="nucleotide sequence ID" value="NC_010943.1"/>
</dbReference>
<dbReference type="SMR" id="B2FLR1"/>
<dbReference type="EnsemblBacteria" id="CAQ44165">
    <property type="protein sequence ID" value="CAQ44165"/>
    <property type="gene ID" value="Smlt0577"/>
</dbReference>
<dbReference type="GeneID" id="93831628"/>
<dbReference type="KEGG" id="sml:Smlt0577"/>
<dbReference type="eggNOG" id="COG0764">
    <property type="taxonomic scope" value="Bacteria"/>
</dbReference>
<dbReference type="HOGENOM" id="CLU_097925_0_0_6"/>
<dbReference type="UniPathway" id="UPA00094"/>
<dbReference type="Proteomes" id="UP000008840">
    <property type="component" value="Chromosome"/>
</dbReference>
<dbReference type="GO" id="GO:0005737">
    <property type="term" value="C:cytoplasm"/>
    <property type="evidence" value="ECO:0007669"/>
    <property type="project" value="UniProtKB-SubCell"/>
</dbReference>
<dbReference type="GO" id="GO:0019171">
    <property type="term" value="F:(3R)-hydroxyacyl-[acyl-carrier-protein] dehydratase activity"/>
    <property type="evidence" value="ECO:0007669"/>
    <property type="project" value="UniProtKB-UniRule"/>
</dbReference>
<dbReference type="GO" id="GO:0034017">
    <property type="term" value="F:trans-2-decenoyl-acyl-carrier-protein isomerase activity"/>
    <property type="evidence" value="ECO:0007669"/>
    <property type="project" value="UniProtKB-UniRule"/>
</dbReference>
<dbReference type="GO" id="GO:0006636">
    <property type="term" value="P:unsaturated fatty acid biosynthetic process"/>
    <property type="evidence" value="ECO:0007669"/>
    <property type="project" value="UniProtKB-UniRule"/>
</dbReference>
<dbReference type="CDD" id="cd01287">
    <property type="entry name" value="FabA"/>
    <property type="match status" value="1"/>
</dbReference>
<dbReference type="Gene3D" id="3.10.129.10">
    <property type="entry name" value="Hotdog Thioesterase"/>
    <property type="match status" value="1"/>
</dbReference>
<dbReference type="HAMAP" id="MF_00405">
    <property type="entry name" value="FabA"/>
    <property type="match status" value="1"/>
</dbReference>
<dbReference type="InterPro" id="IPR010083">
    <property type="entry name" value="FabA"/>
</dbReference>
<dbReference type="InterPro" id="IPR013114">
    <property type="entry name" value="FabA_FabZ"/>
</dbReference>
<dbReference type="InterPro" id="IPR029069">
    <property type="entry name" value="HotDog_dom_sf"/>
</dbReference>
<dbReference type="NCBIfam" id="TIGR01749">
    <property type="entry name" value="fabA"/>
    <property type="match status" value="1"/>
</dbReference>
<dbReference type="NCBIfam" id="NF003509">
    <property type="entry name" value="PRK05174.1"/>
    <property type="match status" value="1"/>
</dbReference>
<dbReference type="PANTHER" id="PTHR30272">
    <property type="entry name" value="3-HYDROXYACYL-[ACYL-CARRIER-PROTEIN] DEHYDRATASE"/>
    <property type="match status" value="1"/>
</dbReference>
<dbReference type="PANTHER" id="PTHR30272:SF8">
    <property type="entry name" value="3-HYDROXYDECANOYL-[ACYL-CARRIER-PROTEIN] DEHYDRATASE"/>
    <property type="match status" value="1"/>
</dbReference>
<dbReference type="Pfam" id="PF07977">
    <property type="entry name" value="FabA"/>
    <property type="match status" value="1"/>
</dbReference>
<dbReference type="SUPFAM" id="SSF54637">
    <property type="entry name" value="Thioesterase/thiol ester dehydrase-isomerase"/>
    <property type="match status" value="1"/>
</dbReference>
<organism>
    <name type="scientific">Stenotrophomonas maltophilia (strain K279a)</name>
    <dbReference type="NCBI Taxonomy" id="522373"/>
    <lineage>
        <taxon>Bacteria</taxon>
        <taxon>Pseudomonadati</taxon>
        <taxon>Pseudomonadota</taxon>
        <taxon>Gammaproteobacteria</taxon>
        <taxon>Lysobacterales</taxon>
        <taxon>Lysobacteraceae</taxon>
        <taxon>Stenotrophomonas</taxon>
        <taxon>Stenotrophomonas maltophilia group</taxon>
    </lineage>
</organism>
<proteinExistence type="inferred from homology"/>
<gene>
    <name evidence="1" type="primary">fabA</name>
    <name type="ordered locus">Smlt0577</name>
</gene>
<name>FABA_STRMK</name>
<sequence>MTRLHAFNREQLLASARGELFGTAAGRLPNDPMLMFDRITDIREDGGPHGKGMVRAELDIRPDLWFFGCHFIGDPVMPGCLGLDAMWQLTGFFLTWLGAPGKGRALGCGEVKFTGQVLPEAKLVRYEIDISRVINRKLVMAQSDARMYVDDREIYSARDLRVGLFTETGSF</sequence>
<comment type="function">
    <text evidence="1">Necessary for the introduction of cis unsaturation into fatty acids. Catalyzes the dehydration of (3R)-3-hydroxydecanoyl-ACP to E-(2)-decenoyl-ACP and then its isomerization to Z-(3)-decenoyl-ACP. Can catalyze the dehydratase reaction for beta-hydroxyacyl-ACPs with saturated chain lengths up to 16:0, being most active on intermediate chain length.</text>
</comment>
<comment type="catalytic activity">
    <reaction evidence="1">
        <text>a (3R)-hydroxyacyl-[ACP] = a (2E)-enoyl-[ACP] + H2O</text>
        <dbReference type="Rhea" id="RHEA:13097"/>
        <dbReference type="Rhea" id="RHEA-COMP:9925"/>
        <dbReference type="Rhea" id="RHEA-COMP:9945"/>
        <dbReference type="ChEBI" id="CHEBI:15377"/>
        <dbReference type="ChEBI" id="CHEBI:78784"/>
        <dbReference type="ChEBI" id="CHEBI:78827"/>
        <dbReference type="EC" id="4.2.1.59"/>
    </reaction>
</comment>
<comment type="catalytic activity">
    <reaction evidence="1">
        <text>(3R)-hydroxydecanoyl-[ACP] = (2E)-decenoyl-[ACP] + H2O</text>
        <dbReference type="Rhea" id="RHEA:41860"/>
        <dbReference type="Rhea" id="RHEA-COMP:9638"/>
        <dbReference type="Rhea" id="RHEA-COMP:9639"/>
        <dbReference type="ChEBI" id="CHEBI:15377"/>
        <dbReference type="ChEBI" id="CHEBI:78466"/>
        <dbReference type="ChEBI" id="CHEBI:78467"/>
    </reaction>
</comment>
<comment type="catalytic activity">
    <reaction evidence="1">
        <text>(2E)-decenoyl-[ACP] = (3Z)-decenoyl-[ACP]</text>
        <dbReference type="Rhea" id="RHEA:23568"/>
        <dbReference type="Rhea" id="RHEA-COMP:9639"/>
        <dbReference type="Rhea" id="RHEA-COMP:9927"/>
        <dbReference type="ChEBI" id="CHEBI:78467"/>
        <dbReference type="ChEBI" id="CHEBI:78798"/>
        <dbReference type="EC" id="5.3.3.14"/>
    </reaction>
</comment>
<comment type="pathway">
    <text evidence="1">Lipid metabolism; fatty acid biosynthesis.</text>
</comment>
<comment type="subunit">
    <text evidence="1">Homodimer.</text>
</comment>
<comment type="subcellular location">
    <subcellularLocation>
        <location evidence="1">Cytoplasm</location>
    </subcellularLocation>
</comment>
<comment type="similarity">
    <text evidence="1">Belongs to the thioester dehydratase family. FabA subfamily.</text>
</comment>
<protein>
    <recommendedName>
        <fullName evidence="1">3-hydroxydecanoyl-[acyl-carrier-protein] dehydratase</fullName>
        <ecNumber evidence="1">4.2.1.59</ecNumber>
    </recommendedName>
    <alternativeName>
        <fullName evidence="1">3-hydroxyacyl-[acyl-carrier-protein] dehydratase FabA</fullName>
    </alternativeName>
    <alternativeName>
        <fullName evidence="1">Beta-hydroxydecanoyl thioester dehydrase</fullName>
    </alternativeName>
    <alternativeName>
        <fullName evidence="1">Trans-2-decenoyl-[acyl-carrier-protein] isomerase</fullName>
        <ecNumber evidence="1">5.3.3.14</ecNumber>
    </alternativeName>
</protein>
<accession>B2FLR1</accession>
<evidence type="ECO:0000255" key="1">
    <source>
        <dbReference type="HAMAP-Rule" id="MF_00405"/>
    </source>
</evidence>
<feature type="chain" id="PRO_1000201222" description="3-hydroxydecanoyl-[acyl-carrier-protein] dehydratase">
    <location>
        <begin position="1"/>
        <end position="171"/>
    </location>
</feature>
<feature type="active site" evidence="1">
    <location>
        <position position="70"/>
    </location>
</feature>
<reference key="1">
    <citation type="journal article" date="2008" name="Genome Biol.">
        <title>The complete genome, comparative and functional analysis of Stenotrophomonas maltophilia reveals an organism heavily shielded by drug resistance determinants.</title>
        <authorList>
            <person name="Crossman L.C."/>
            <person name="Gould V.C."/>
            <person name="Dow J.M."/>
            <person name="Vernikos G.S."/>
            <person name="Okazaki A."/>
            <person name="Sebaihia M."/>
            <person name="Saunders D."/>
            <person name="Arrowsmith C."/>
            <person name="Carver T."/>
            <person name="Peters N."/>
            <person name="Adlem E."/>
            <person name="Kerhornou A."/>
            <person name="Lord A."/>
            <person name="Murphy L."/>
            <person name="Seeger K."/>
            <person name="Squares R."/>
            <person name="Rutter S."/>
            <person name="Quail M.A."/>
            <person name="Rajandream M.A."/>
            <person name="Harris D."/>
            <person name="Churcher C."/>
            <person name="Bentley S.D."/>
            <person name="Parkhill J."/>
            <person name="Thomson N.R."/>
            <person name="Avison M.B."/>
        </authorList>
    </citation>
    <scope>NUCLEOTIDE SEQUENCE [LARGE SCALE GENOMIC DNA]</scope>
    <source>
        <strain>K279a</strain>
    </source>
</reference>